<keyword id="KW-0274">FAD</keyword>
<keyword id="KW-0285">Flavoprotein</keyword>
<keyword id="KW-0560">Oxidoreductase</keyword>
<keyword id="KW-0576">Peroxisome</keyword>
<keyword id="KW-1185">Reference proteome</keyword>
<name>PAO2_ARATH</name>
<protein>
    <recommendedName>
        <fullName evidence="8">Polyamine oxidase 2</fullName>
        <shortName evidence="8">AtPAO2</shortName>
        <ecNumber evidence="6">1.5.3.-</ecNumber>
    </recommendedName>
    <alternativeName>
        <fullName evidence="9">Amine oxidase 1</fullName>
    </alternativeName>
</protein>
<feature type="chain" id="PRO_0000352508" description="Polyamine oxidase 2">
    <location>
        <begin position="1"/>
        <end position="490"/>
    </location>
</feature>
<feature type="short sequence motif" description="Microbody targeting signal" evidence="2">
    <location>
        <begin position="488"/>
        <end position="490"/>
    </location>
</feature>
<feature type="binding site" evidence="1">
    <location>
        <position position="57"/>
    </location>
    <ligand>
        <name>FAD</name>
        <dbReference type="ChEBI" id="CHEBI:57692"/>
    </ligand>
</feature>
<feature type="binding site" evidence="1">
    <location>
        <position position="65"/>
    </location>
    <ligand>
        <name>FAD</name>
        <dbReference type="ChEBI" id="CHEBI:57692"/>
    </ligand>
</feature>
<feature type="binding site" evidence="1">
    <location>
        <position position="246"/>
    </location>
    <ligand>
        <name>FAD</name>
        <dbReference type="ChEBI" id="CHEBI:57692"/>
    </ligand>
</feature>
<feature type="binding site" evidence="1">
    <location>
        <position position="433"/>
    </location>
    <ligand>
        <name>FAD</name>
        <dbReference type="ChEBI" id="CHEBI:57692"/>
    </ligand>
</feature>
<feature type="sequence conflict" description="In Ref. 4; AAL75899." evidence="10" ref="4">
    <original>E</original>
    <variation>G</variation>
    <location>
        <position position="288"/>
    </location>
</feature>
<organism>
    <name type="scientific">Arabidopsis thaliana</name>
    <name type="common">Mouse-ear cress</name>
    <dbReference type="NCBI Taxonomy" id="3702"/>
    <lineage>
        <taxon>Eukaryota</taxon>
        <taxon>Viridiplantae</taxon>
        <taxon>Streptophyta</taxon>
        <taxon>Embryophyta</taxon>
        <taxon>Tracheophyta</taxon>
        <taxon>Spermatophyta</taxon>
        <taxon>Magnoliopsida</taxon>
        <taxon>eudicotyledons</taxon>
        <taxon>Gunneridae</taxon>
        <taxon>Pentapetalae</taxon>
        <taxon>rosids</taxon>
        <taxon>malvids</taxon>
        <taxon>Brassicales</taxon>
        <taxon>Brassicaceae</taxon>
        <taxon>Camelineae</taxon>
        <taxon>Arabidopsis</taxon>
    </lineage>
</organism>
<comment type="function">
    <text evidence="5 6 7 11">Flavoenzyme involved in polyamine back-conversion (PubMed:20532512, PubMed:21081665). Catalyzes the oxidation of the secondary amino group of polyamines, such as spermine, spermidine and their acetyl derivatives (PubMed:20532512, PubMed:21081665). Substrate preference is N(1)-acetylspermine &gt; spermine &gt; spermidine (PubMed:21081665). Plays an important role in the regulation of polyamine intracellular concentration (Probable). Involved in abscisic acid-mediated developmental processes (PubMed:26310141). May contribute to nitric oxide-mediated effects on root growth (PubMed:26310141).</text>
</comment>
<comment type="catalytic activity">
    <reaction evidence="6">
        <text>spermine + O2 + H2O = 3-aminopropanal + spermidine + H2O2</text>
        <dbReference type="Rhea" id="RHEA:25804"/>
        <dbReference type="ChEBI" id="CHEBI:15377"/>
        <dbReference type="ChEBI" id="CHEBI:15379"/>
        <dbReference type="ChEBI" id="CHEBI:16240"/>
        <dbReference type="ChEBI" id="CHEBI:45725"/>
        <dbReference type="ChEBI" id="CHEBI:57834"/>
        <dbReference type="ChEBI" id="CHEBI:58374"/>
    </reaction>
</comment>
<comment type="catalytic activity">
    <reaction evidence="6">
        <text>N(1)-acetylspermine + O2 + H2O = 3-acetamidopropanal + spermidine + H2O2</text>
        <dbReference type="Rhea" id="RHEA:25800"/>
        <dbReference type="ChEBI" id="CHEBI:15377"/>
        <dbReference type="ChEBI" id="CHEBI:15379"/>
        <dbReference type="ChEBI" id="CHEBI:16240"/>
        <dbReference type="ChEBI" id="CHEBI:30322"/>
        <dbReference type="ChEBI" id="CHEBI:57834"/>
        <dbReference type="ChEBI" id="CHEBI:58101"/>
    </reaction>
</comment>
<comment type="catalytic activity">
    <reaction evidence="6">
        <text>spermidine + O2 + H2O = 3-aminopropanal + putrescine + H2O2</text>
        <dbReference type="Rhea" id="RHEA:25808"/>
        <dbReference type="ChEBI" id="CHEBI:15377"/>
        <dbReference type="ChEBI" id="CHEBI:15379"/>
        <dbReference type="ChEBI" id="CHEBI:16240"/>
        <dbReference type="ChEBI" id="CHEBI:57834"/>
        <dbReference type="ChEBI" id="CHEBI:58374"/>
        <dbReference type="ChEBI" id="CHEBI:326268"/>
    </reaction>
</comment>
<comment type="cofactor">
    <cofactor evidence="6">
        <name>FAD</name>
        <dbReference type="ChEBI" id="CHEBI:57692"/>
    </cofactor>
    <text evidence="11">Binds 1 FAD per subunit.</text>
</comment>
<comment type="biophysicochemical properties">
    <kinetics>
        <KM evidence="6">0.27 mM for spermine</KM>
        <KM evidence="6">0.409 mM for spermidine</KM>
        <KM evidence="6">0.233 mM for N(1)-acetylspermine</KM>
    </kinetics>
</comment>
<comment type="pathway">
    <text evidence="10">Amine and polyamine degradation; spermine degradation.</text>
</comment>
<comment type="pathway">
    <text evidence="10">Amine and polyamine degradation; spermidine degradation.</text>
</comment>
<comment type="subcellular location">
    <subcellularLocation>
        <location evidence="4">Peroxisome</location>
    </subcellularLocation>
</comment>
<comment type="tissue specificity">
    <text>Highly expressed in flowers and siliques. Also found in leaf and stem and in low levels in cotyledons, roots and in seedlings.</text>
</comment>
<comment type="induction">
    <text evidence="3">By abscisic acid, jasmonate, salicylic acid, wounding and flagellin 22, a pathogen elicitor.</text>
</comment>
<comment type="similarity">
    <text evidence="10">Belongs to the flavin monoamine oxidase family.</text>
</comment>
<accession>Q9SKX5</accession>
<accession>Q8S9L4</accession>
<evidence type="ECO:0000250" key="1">
    <source>
        <dbReference type="UniProtKB" id="O64411"/>
    </source>
</evidence>
<evidence type="ECO:0000255" key="2"/>
<evidence type="ECO:0000269" key="3">
    <source>
    </source>
</evidence>
<evidence type="ECO:0000269" key="4">
    <source>
    </source>
</evidence>
<evidence type="ECO:0000269" key="5">
    <source>
    </source>
</evidence>
<evidence type="ECO:0000269" key="6">
    <source>
    </source>
</evidence>
<evidence type="ECO:0000269" key="7">
    <source>
    </source>
</evidence>
<evidence type="ECO:0000303" key="8">
    <source>
    </source>
</evidence>
<evidence type="ECO:0000303" key="9">
    <source ref="1"/>
</evidence>
<evidence type="ECO:0000305" key="10"/>
<evidence type="ECO:0000305" key="11">
    <source>
    </source>
</evidence>
<evidence type="ECO:0000312" key="12">
    <source>
        <dbReference type="Araport" id="AT2G43020"/>
    </source>
</evidence>
<evidence type="ECO:0000312" key="13">
    <source>
        <dbReference type="EMBL" id="AAD22129.1"/>
    </source>
</evidence>
<reference key="1">
    <citation type="submission" date="2001-03" db="EMBL/GenBank/DDBJ databases">
        <title>A putative amine oxidase 1 from Arabidopsis.</title>
        <authorList>
            <person name="Pinontoan R."/>
            <person name="Cunningham K.W."/>
            <person name="Iida H."/>
            <person name="Uozumi N."/>
            <person name="Muto S."/>
        </authorList>
    </citation>
    <scope>NUCLEOTIDE SEQUENCE [MRNA]</scope>
</reference>
<reference key="2">
    <citation type="journal article" date="1999" name="Nature">
        <title>Sequence and analysis of chromosome 2 of the plant Arabidopsis thaliana.</title>
        <authorList>
            <person name="Lin X."/>
            <person name="Kaul S."/>
            <person name="Rounsley S.D."/>
            <person name="Shea T.P."/>
            <person name="Benito M.-I."/>
            <person name="Town C.D."/>
            <person name="Fujii C.Y."/>
            <person name="Mason T.M."/>
            <person name="Bowman C.L."/>
            <person name="Barnstead M.E."/>
            <person name="Feldblyum T.V."/>
            <person name="Buell C.R."/>
            <person name="Ketchum K.A."/>
            <person name="Lee J.J."/>
            <person name="Ronning C.M."/>
            <person name="Koo H.L."/>
            <person name="Moffat K.S."/>
            <person name="Cronin L.A."/>
            <person name="Shen M."/>
            <person name="Pai G."/>
            <person name="Van Aken S."/>
            <person name="Umayam L."/>
            <person name="Tallon L.J."/>
            <person name="Gill J.E."/>
            <person name="Adams M.D."/>
            <person name="Carrera A.J."/>
            <person name="Creasy T.H."/>
            <person name="Goodman H.M."/>
            <person name="Somerville C.R."/>
            <person name="Copenhaver G.P."/>
            <person name="Preuss D."/>
            <person name="Nierman W.C."/>
            <person name="White O."/>
            <person name="Eisen J.A."/>
            <person name="Salzberg S.L."/>
            <person name="Fraser C.M."/>
            <person name="Venter J.C."/>
        </authorList>
    </citation>
    <scope>NUCLEOTIDE SEQUENCE [LARGE SCALE GENOMIC DNA]</scope>
    <source>
        <strain>cv. Columbia</strain>
    </source>
</reference>
<reference key="3">
    <citation type="journal article" date="2017" name="Plant J.">
        <title>Araport11: a complete reannotation of the Arabidopsis thaliana reference genome.</title>
        <authorList>
            <person name="Cheng C.Y."/>
            <person name="Krishnakumar V."/>
            <person name="Chan A.P."/>
            <person name="Thibaud-Nissen F."/>
            <person name="Schobel S."/>
            <person name="Town C.D."/>
        </authorList>
    </citation>
    <scope>GENOME REANNOTATION</scope>
    <source>
        <strain>cv. Columbia</strain>
    </source>
</reference>
<reference key="4">
    <citation type="journal article" date="2003" name="Science">
        <title>Empirical analysis of transcriptional activity in the Arabidopsis genome.</title>
        <authorList>
            <person name="Yamada K."/>
            <person name="Lim J."/>
            <person name="Dale J.M."/>
            <person name="Chen H."/>
            <person name="Shinn P."/>
            <person name="Palm C.J."/>
            <person name="Southwick A.M."/>
            <person name="Wu H.C."/>
            <person name="Kim C.J."/>
            <person name="Nguyen M."/>
            <person name="Pham P.K."/>
            <person name="Cheuk R.F."/>
            <person name="Karlin-Newmann G."/>
            <person name="Liu S.X."/>
            <person name="Lam B."/>
            <person name="Sakano H."/>
            <person name="Wu T."/>
            <person name="Yu G."/>
            <person name="Miranda M."/>
            <person name="Quach H.L."/>
            <person name="Tripp M."/>
            <person name="Chang C.H."/>
            <person name="Lee J.M."/>
            <person name="Toriumi M.J."/>
            <person name="Chan M.M."/>
            <person name="Tang C.C."/>
            <person name="Onodera C.S."/>
            <person name="Deng J.M."/>
            <person name="Akiyama K."/>
            <person name="Ansari Y."/>
            <person name="Arakawa T."/>
            <person name="Banh J."/>
            <person name="Banno F."/>
            <person name="Bowser L."/>
            <person name="Brooks S.Y."/>
            <person name="Carninci P."/>
            <person name="Chao Q."/>
            <person name="Choy N."/>
            <person name="Enju A."/>
            <person name="Goldsmith A.D."/>
            <person name="Gurjal M."/>
            <person name="Hansen N.F."/>
            <person name="Hayashizaki Y."/>
            <person name="Johnson-Hopson C."/>
            <person name="Hsuan V.W."/>
            <person name="Iida K."/>
            <person name="Karnes M."/>
            <person name="Khan S."/>
            <person name="Koesema E."/>
            <person name="Ishida J."/>
            <person name="Jiang P.X."/>
            <person name="Jones T."/>
            <person name="Kawai J."/>
            <person name="Kamiya A."/>
            <person name="Meyers C."/>
            <person name="Nakajima M."/>
            <person name="Narusaka M."/>
            <person name="Seki M."/>
            <person name="Sakurai T."/>
            <person name="Satou M."/>
            <person name="Tamse R."/>
            <person name="Vaysberg M."/>
            <person name="Wallender E.K."/>
            <person name="Wong C."/>
            <person name="Yamamura Y."/>
            <person name="Yuan S."/>
            <person name="Shinozaki K."/>
            <person name="Davis R.W."/>
            <person name="Theologis A."/>
            <person name="Ecker J.R."/>
        </authorList>
    </citation>
    <scope>NUCLEOTIDE SEQUENCE [LARGE SCALE MRNA]</scope>
    <source>
        <strain>cv. Columbia</strain>
    </source>
</reference>
<reference key="5">
    <citation type="submission" date="2006-09" db="EMBL/GenBank/DDBJ databases">
        <title>Arabidopsis ORF clones.</title>
        <authorList>
            <person name="Bautista V.R."/>
            <person name="Kim C.J."/>
            <person name="Chen H."/>
            <person name="Quinitio C."/>
            <person name="Ecker J.R."/>
        </authorList>
    </citation>
    <scope>NUCLEOTIDE SEQUENCE [LARGE SCALE MRNA]</scope>
    <source>
        <strain>cv. Columbia</strain>
    </source>
</reference>
<reference key="6">
    <citation type="journal article" date="2006" name="Plant Physiol.">
        <title>Heterologous expression and biochemical characterization of a polyamine oxidase from Arabidopsis involved in polyamine back conversion.</title>
        <authorList>
            <person name="Tavladoraki P."/>
            <person name="Rossi M.N."/>
            <person name="Saccuti G."/>
            <person name="Perez-Amador M.A."/>
            <person name="Polticelli F."/>
            <person name="Angelini R."/>
            <person name="Federico R."/>
        </authorList>
    </citation>
    <scope>IDENTIFICATION</scope>
</reference>
<reference key="7">
    <citation type="journal article" date="2008" name="Plant Cell Physiol.">
        <title>A putative peroxisomal polyamine oxidase, AtPAO4, is involved in polyamine catabolism in Arabidopsis thaliana.</title>
        <authorList>
            <person name="Kamada-Nobusada T."/>
            <person name="Hayashi M."/>
            <person name="Fukazawa M."/>
            <person name="Sakakibara H."/>
            <person name="Nishimura M."/>
        </authorList>
    </citation>
    <scope>SUBCELLULAR LOCATION</scope>
</reference>
<reference key="8">
    <citation type="journal article" date="2008" name="Plant Physiol.">
        <title>Bridging the gap between plant and mammalian polyamine catabolism: a novel peroxisomal polyamine oxidase responsible for a full back-conversion pathway in Arabidopsis thaliana.</title>
        <authorList>
            <person name="Moschou P.N."/>
            <person name="Sanmartin M."/>
            <person name="Andriopoulou A.H."/>
            <person name="Rojo E."/>
            <person name="Sanchez-Serrano J.J."/>
            <person name="Roubelakis-Angelakis K.A."/>
        </authorList>
    </citation>
    <scope>INDUCTION</scope>
</reference>
<reference key="9">
    <citation type="journal article" date="2010" name="Plant Cell Rep.">
        <title>Characterization of five polyamine oxidase isoforms in Arabidopsis thaliana.</title>
        <authorList>
            <person name="Takahashi Y."/>
            <person name="Cong R."/>
            <person name="Sagor G.H."/>
            <person name="Niitsu M."/>
            <person name="Berberich T."/>
            <person name="Kusano T."/>
        </authorList>
    </citation>
    <scope>FUNCTION</scope>
</reference>
<reference key="10">
    <citation type="journal article" date="2011" name="J. Exp. Bot.">
        <title>Functional diversity inside the Arabidopsis polyamine oxidase gene family.</title>
        <authorList>
            <person name="Fincato P."/>
            <person name="Moschou P.N."/>
            <person name="Spedaletti V."/>
            <person name="Tavazza R."/>
            <person name="Angelini R."/>
            <person name="Federico R."/>
            <person name="Roubelakis-Angelakis K.A."/>
            <person name="Tavladoraki P."/>
        </authorList>
    </citation>
    <scope>FUNCTION</scope>
    <scope>CATALYTIC ACTIVITY</scope>
    <scope>COFACTOR</scope>
    <scope>BIOPHYSICOCHEMICAL PROPERTIES</scope>
</reference>
<reference key="11">
    <citation type="journal article" date="2015" name="Plant Physiol. Biochem.">
        <title>POLYAMINE OXIDASE2 of Arabidopsis contributes to ABA mediated plant developmental processes.</title>
        <authorList>
            <person name="Wimalasekera R."/>
            <person name="Schaarschmidt F."/>
            <person name="Angelini R."/>
            <person name="Cona A."/>
            <person name="Tavladoraki P."/>
            <person name="Scherer G.F."/>
        </authorList>
    </citation>
    <scope>FUNCTION</scope>
</reference>
<sequence length="490" mass="54321">MESRKNSDRQMRRANCFSAGERMKTRSPSVIVIGGGFGGISAARTLQDASFQVMVLESRDRIGGRVHTDYSFGFPVDLGASWLHGVCKENPLAPVIGRLGLPLYRTSGDNSVLYDHDLESYALFDMDGNQVPQELVTQIGVTFERILEEINKVRDEQDADISISQAFSIVFSRKPELRLEGLAHNVLQWYVCRMEGWFAADAETISAKCWDQEELLPGGHGLMVRGYRPVINTLAKGLDIRVGHRVTKIVRRYNGVKVTTENGQTFVADAAVIAVPLGVLKSGTIKFEPKLPEWKQEAINDLGVGIENKIILHFEKVFWPKVEFLGVVAETSYGCSYFLNLHKATGHPVLVYMPAGQLAKDIEKMSDEAAANFAVLQLQRILPDALPPVQYLVSRWGSDVNSMGSYSYDIVGKPHDLYERLRVPVDNLFFAGEATSSSFPGSVHGAYSTGLMAAEDCRMRVLERYGELDLFQPVMGEEGPASVPLLISRL</sequence>
<proteinExistence type="evidence at protein level"/>
<dbReference type="EC" id="1.5.3.-" evidence="6"/>
<dbReference type="EMBL" id="AF364952">
    <property type="protein sequence ID" value="AAO85404.1"/>
    <property type="molecule type" value="mRNA"/>
</dbReference>
<dbReference type="EMBL" id="AC006224">
    <property type="protein sequence ID" value="AAD22129.1"/>
    <property type="molecule type" value="Genomic_DNA"/>
</dbReference>
<dbReference type="EMBL" id="CP002685">
    <property type="protein sequence ID" value="AEC10199.1"/>
    <property type="molecule type" value="Genomic_DNA"/>
</dbReference>
<dbReference type="EMBL" id="AY074846">
    <property type="protein sequence ID" value="AAL75899.1"/>
    <property type="molecule type" value="mRNA"/>
</dbReference>
<dbReference type="EMBL" id="BT029025">
    <property type="protein sequence ID" value="ABI93934.1"/>
    <property type="molecule type" value="mRNA"/>
</dbReference>
<dbReference type="PIR" id="A84861">
    <property type="entry name" value="A84861"/>
</dbReference>
<dbReference type="RefSeq" id="NP_181830.1">
    <property type="nucleotide sequence ID" value="NM_129863.3"/>
</dbReference>
<dbReference type="SMR" id="Q9SKX5"/>
<dbReference type="BioGRID" id="4241">
    <property type="interactions" value="1"/>
</dbReference>
<dbReference type="FunCoup" id="Q9SKX5">
    <property type="interactions" value="16"/>
</dbReference>
<dbReference type="STRING" id="3702.Q9SKX5"/>
<dbReference type="PaxDb" id="3702-AT2G43020.1"/>
<dbReference type="ProteomicsDB" id="236831"/>
<dbReference type="EnsemblPlants" id="AT2G43020.1">
    <property type="protein sequence ID" value="AT2G43020.1"/>
    <property type="gene ID" value="AT2G43020"/>
</dbReference>
<dbReference type="GeneID" id="818904"/>
<dbReference type="Gramene" id="AT2G43020.1">
    <property type="protein sequence ID" value="AT2G43020.1"/>
    <property type="gene ID" value="AT2G43020"/>
</dbReference>
<dbReference type="KEGG" id="ath:AT2G43020"/>
<dbReference type="Araport" id="AT2G43020"/>
<dbReference type="TAIR" id="AT2G43020">
    <property type="gene designation" value="PAO2"/>
</dbReference>
<dbReference type="eggNOG" id="KOG0029">
    <property type="taxonomic scope" value="Eukaryota"/>
</dbReference>
<dbReference type="HOGENOM" id="CLU_004498_10_0_1"/>
<dbReference type="InParanoid" id="Q9SKX5"/>
<dbReference type="OMA" id="EFFDNYQ"/>
<dbReference type="OrthoDB" id="5046242at2759"/>
<dbReference type="PhylomeDB" id="Q9SKX5"/>
<dbReference type="BioCyc" id="ARA:AT2G43020-MONOMER"/>
<dbReference type="BRENDA" id="1.5.3.17">
    <property type="organism ID" value="399"/>
</dbReference>
<dbReference type="UniPathway" id="UPA00211"/>
<dbReference type="UniPathway" id="UPA00250"/>
<dbReference type="PRO" id="PR:Q9SKX5"/>
<dbReference type="Proteomes" id="UP000006548">
    <property type="component" value="Chromosome 2"/>
</dbReference>
<dbReference type="ExpressionAtlas" id="Q9SKX5">
    <property type="expression patterns" value="baseline and differential"/>
</dbReference>
<dbReference type="GO" id="GO:0005777">
    <property type="term" value="C:peroxisome"/>
    <property type="evidence" value="ECO:0007669"/>
    <property type="project" value="UniProtKB-SubCell"/>
</dbReference>
<dbReference type="GO" id="GO:0052903">
    <property type="term" value="F:N(1)-acetylpolyamine oxidase (3-acetamidopropanal-forming) activity"/>
    <property type="evidence" value="ECO:0007669"/>
    <property type="project" value="RHEA"/>
</dbReference>
<dbReference type="GO" id="GO:0046592">
    <property type="term" value="F:polyamine oxidase activity"/>
    <property type="evidence" value="ECO:0000314"/>
    <property type="project" value="TAIR"/>
</dbReference>
<dbReference type="GO" id="GO:0052901">
    <property type="term" value="F:spermine oxidase activity"/>
    <property type="evidence" value="ECO:0007669"/>
    <property type="project" value="RHEA"/>
</dbReference>
<dbReference type="GO" id="GO:0006598">
    <property type="term" value="P:polyamine catabolic process"/>
    <property type="evidence" value="ECO:0000314"/>
    <property type="project" value="TAIR"/>
</dbReference>
<dbReference type="GO" id="GO:0046203">
    <property type="term" value="P:spermidine catabolic process"/>
    <property type="evidence" value="ECO:0007669"/>
    <property type="project" value="UniProtKB-UniPathway"/>
</dbReference>
<dbReference type="GO" id="GO:0046208">
    <property type="term" value="P:spermine catabolic process"/>
    <property type="evidence" value="ECO:0007669"/>
    <property type="project" value="UniProtKB-UniPathway"/>
</dbReference>
<dbReference type="Gene3D" id="3.90.660.10">
    <property type="match status" value="1"/>
</dbReference>
<dbReference type="Gene3D" id="3.50.50.60">
    <property type="entry name" value="FAD/NAD(P)-binding domain"/>
    <property type="match status" value="1"/>
</dbReference>
<dbReference type="InterPro" id="IPR002937">
    <property type="entry name" value="Amino_oxidase"/>
</dbReference>
<dbReference type="InterPro" id="IPR036188">
    <property type="entry name" value="FAD/NAD-bd_sf"/>
</dbReference>
<dbReference type="InterPro" id="IPR001613">
    <property type="entry name" value="Flavin_amine_oxidase"/>
</dbReference>
<dbReference type="InterPro" id="IPR050281">
    <property type="entry name" value="Flavin_monoamine_oxidase"/>
</dbReference>
<dbReference type="PANTHER" id="PTHR10742">
    <property type="entry name" value="FLAVIN MONOAMINE OXIDASE"/>
    <property type="match status" value="1"/>
</dbReference>
<dbReference type="PANTHER" id="PTHR10742:SF386">
    <property type="entry name" value="LYSINE-SPECIFIC HISTONE DEMETHYLASE 1A"/>
    <property type="match status" value="1"/>
</dbReference>
<dbReference type="Pfam" id="PF01593">
    <property type="entry name" value="Amino_oxidase"/>
    <property type="match status" value="1"/>
</dbReference>
<dbReference type="PRINTS" id="PR00757">
    <property type="entry name" value="AMINEOXDASEF"/>
</dbReference>
<dbReference type="SUPFAM" id="SSF54373">
    <property type="entry name" value="FAD-linked reductases, C-terminal domain"/>
    <property type="match status" value="1"/>
</dbReference>
<dbReference type="SUPFAM" id="SSF51905">
    <property type="entry name" value="FAD/NAD(P)-binding domain"/>
    <property type="match status" value="1"/>
</dbReference>
<gene>
    <name evidence="8" type="primary">PAO2</name>
    <name evidence="12" type="ordered locus">At2g43020</name>
    <name evidence="13" type="ORF">MFL8.12</name>
</gene>